<keyword id="KW-0687">Ribonucleoprotein</keyword>
<keyword id="KW-0689">Ribosomal protein</keyword>
<keyword id="KW-0694">RNA-binding</keyword>
<keyword id="KW-0699">rRNA-binding</keyword>
<protein>
    <recommendedName>
        <fullName evidence="1">Large ribosomal subunit protein uL14</fullName>
    </recommendedName>
    <alternativeName>
        <fullName evidence="2">50S ribosomal protein L14</fullName>
    </alternativeName>
</protein>
<name>RL14_BACCN</name>
<sequence>MIQQESRLKVADNSGARELLTIKVLGGSGRKYANIGDIIVATVKQATPGGVVKKGDVVKAVVVRTKSGARRPDGSYIRFDENAAVIIKDDKSPRGTRIFGPVARELRDSNFMKIVSLAPEVL</sequence>
<accession>A7GK30</accession>
<organism>
    <name type="scientific">Bacillus cytotoxicus (strain DSM 22905 / CIP 110041 / 391-98 / NVH 391-98)</name>
    <dbReference type="NCBI Taxonomy" id="315749"/>
    <lineage>
        <taxon>Bacteria</taxon>
        <taxon>Bacillati</taxon>
        <taxon>Bacillota</taxon>
        <taxon>Bacilli</taxon>
        <taxon>Bacillales</taxon>
        <taxon>Bacillaceae</taxon>
        <taxon>Bacillus</taxon>
        <taxon>Bacillus cereus group</taxon>
    </lineage>
</organism>
<feature type="chain" id="PRO_1000087114" description="Large ribosomal subunit protein uL14">
    <location>
        <begin position="1"/>
        <end position="122"/>
    </location>
</feature>
<reference key="1">
    <citation type="journal article" date="2008" name="Chem. Biol. Interact.">
        <title>Extending the Bacillus cereus group genomics to putative food-borne pathogens of different toxicity.</title>
        <authorList>
            <person name="Lapidus A."/>
            <person name="Goltsman E."/>
            <person name="Auger S."/>
            <person name="Galleron N."/>
            <person name="Segurens B."/>
            <person name="Dossat C."/>
            <person name="Land M.L."/>
            <person name="Broussolle V."/>
            <person name="Brillard J."/>
            <person name="Guinebretiere M.-H."/>
            <person name="Sanchis V."/>
            <person name="Nguen-the C."/>
            <person name="Lereclus D."/>
            <person name="Richardson P."/>
            <person name="Wincker P."/>
            <person name="Weissenbach J."/>
            <person name="Ehrlich S.D."/>
            <person name="Sorokin A."/>
        </authorList>
    </citation>
    <scope>NUCLEOTIDE SEQUENCE [LARGE SCALE GENOMIC DNA]</scope>
    <source>
        <strain>DSM 22905 / CIP 110041 / 391-98 / NVH 391-98</strain>
    </source>
</reference>
<comment type="function">
    <text evidence="1">Binds to 23S rRNA. Forms part of two intersubunit bridges in the 70S ribosome.</text>
</comment>
<comment type="subunit">
    <text evidence="1">Part of the 50S ribosomal subunit. Forms a cluster with proteins L3 and L19. In the 70S ribosome, L14 and L19 interact and together make contacts with the 16S rRNA in bridges B5 and B8.</text>
</comment>
<comment type="similarity">
    <text evidence="1">Belongs to the universal ribosomal protein uL14 family.</text>
</comment>
<proteinExistence type="inferred from homology"/>
<gene>
    <name evidence="1" type="primary">rplN</name>
    <name type="ordered locus">Bcer98_0114</name>
</gene>
<evidence type="ECO:0000255" key="1">
    <source>
        <dbReference type="HAMAP-Rule" id="MF_01367"/>
    </source>
</evidence>
<evidence type="ECO:0000305" key="2"/>
<dbReference type="EMBL" id="CP000764">
    <property type="protein sequence ID" value="ABS20488.1"/>
    <property type="molecule type" value="Genomic_DNA"/>
</dbReference>
<dbReference type="RefSeq" id="WP_011983254.1">
    <property type="nucleotide sequence ID" value="NC_009674.1"/>
</dbReference>
<dbReference type="SMR" id="A7GK30"/>
<dbReference type="STRING" id="315749.Bcer98_0114"/>
<dbReference type="GeneID" id="33895435"/>
<dbReference type="KEGG" id="bcy:Bcer98_0114"/>
<dbReference type="eggNOG" id="COG0093">
    <property type="taxonomic scope" value="Bacteria"/>
</dbReference>
<dbReference type="HOGENOM" id="CLU_095071_2_1_9"/>
<dbReference type="OrthoDB" id="9806379at2"/>
<dbReference type="Proteomes" id="UP000002300">
    <property type="component" value="Chromosome"/>
</dbReference>
<dbReference type="GO" id="GO:0022625">
    <property type="term" value="C:cytosolic large ribosomal subunit"/>
    <property type="evidence" value="ECO:0007669"/>
    <property type="project" value="TreeGrafter"/>
</dbReference>
<dbReference type="GO" id="GO:0070180">
    <property type="term" value="F:large ribosomal subunit rRNA binding"/>
    <property type="evidence" value="ECO:0007669"/>
    <property type="project" value="TreeGrafter"/>
</dbReference>
<dbReference type="GO" id="GO:0003735">
    <property type="term" value="F:structural constituent of ribosome"/>
    <property type="evidence" value="ECO:0007669"/>
    <property type="project" value="InterPro"/>
</dbReference>
<dbReference type="GO" id="GO:0006412">
    <property type="term" value="P:translation"/>
    <property type="evidence" value="ECO:0007669"/>
    <property type="project" value="UniProtKB-UniRule"/>
</dbReference>
<dbReference type="CDD" id="cd00337">
    <property type="entry name" value="Ribosomal_uL14"/>
    <property type="match status" value="1"/>
</dbReference>
<dbReference type="FunFam" id="2.40.150.20:FF:000001">
    <property type="entry name" value="50S ribosomal protein L14"/>
    <property type="match status" value="1"/>
</dbReference>
<dbReference type="Gene3D" id="2.40.150.20">
    <property type="entry name" value="Ribosomal protein L14"/>
    <property type="match status" value="1"/>
</dbReference>
<dbReference type="HAMAP" id="MF_01367">
    <property type="entry name" value="Ribosomal_uL14"/>
    <property type="match status" value="1"/>
</dbReference>
<dbReference type="InterPro" id="IPR000218">
    <property type="entry name" value="Ribosomal_uL14"/>
</dbReference>
<dbReference type="InterPro" id="IPR005745">
    <property type="entry name" value="Ribosomal_uL14_bac-type"/>
</dbReference>
<dbReference type="InterPro" id="IPR019972">
    <property type="entry name" value="Ribosomal_uL14_CS"/>
</dbReference>
<dbReference type="InterPro" id="IPR036853">
    <property type="entry name" value="Ribosomal_uL14_sf"/>
</dbReference>
<dbReference type="NCBIfam" id="TIGR01067">
    <property type="entry name" value="rplN_bact"/>
    <property type="match status" value="1"/>
</dbReference>
<dbReference type="PANTHER" id="PTHR11761">
    <property type="entry name" value="50S/60S RIBOSOMAL PROTEIN L14/L23"/>
    <property type="match status" value="1"/>
</dbReference>
<dbReference type="PANTHER" id="PTHR11761:SF3">
    <property type="entry name" value="LARGE RIBOSOMAL SUBUNIT PROTEIN UL14M"/>
    <property type="match status" value="1"/>
</dbReference>
<dbReference type="Pfam" id="PF00238">
    <property type="entry name" value="Ribosomal_L14"/>
    <property type="match status" value="1"/>
</dbReference>
<dbReference type="SMART" id="SM01374">
    <property type="entry name" value="Ribosomal_L14"/>
    <property type="match status" value="1"/>
</dbReference>
<dbReference type="SUPFAM" id="SSF50193">
    <property type="entry name" value="Ribosomal protein L14"/>
    <property type="match status" value="1"/>
</dbReference>
<dbReference type="PROSITE" id="PS00049">
    <property type="entry name" value="RIBOSOMAL_L14"/>
    <property type="match status" value="1"/>
</dbReference>